<sequence>MIPKVSKIIPWIKDNKKFLKKTYKGIERESLRIDIDGNISKKPHPIIFGSPLTHNWITTDFSESLLELITPVSNSKKYTINFLNDLHIFIIKNLINENLWPMSMPCKINNDSSIIIAQYGNSKLGRTKTIYRNGLKNRYGAKMQIISGVHYNFSFHKDFWKKYNNFYKIQDKFSSIGYFNLIRNYYRFGWIIPYFFGASPIAHSSFFKGLNTDLIFKKNKFGDIYLPFSTSLRLSEIGYINKVQKKIKLKFNNIEEYVDIVKKAMKTPYLNYKKIELKNNEKNLQINVNLLQKENELYSHVRPKRSLNKNKYKLEDLIYKGIEYIEIRSLDVNPFSPIGIKINQIYFLDIFLIWCILIESPKINDEELRSINENWNRVILYGRNPKIKLINFFKKKEKKLSEILKFILNDLQILVESLAFKKNNKIYQKIFFDLHKMTDNPNKTLSGKLLEESIEYGVERLGLDMSKSHKINIENKKLKVINYQSLIKEAEKSIKEQIVLEKNET</sequence>
<name>GSH1_WIGBR</name>
<accession>Q8D2V5</accession>
<feature type="chain" id="PRO_0000192546" description="Glutamate--cysteine ligase">
    <location>
        <begin position="1"/>
        <end position="505"/>
    </location>
</feature>
<organism>
    <name type="scientific">Wigglesworthia glossinidia brevipalpis</name>
    <dbReference type="NCBI Taxonomy" id="36870"/>
    <lineage>
        <taxon>Bacteria</taxon>
        <taxon>Pseudomonadati</taxon>
        <taxon>Pseudomonadota</taxon>
        <taxon>Gammaproteobacteria</taxon>
        <taxon>Enterobacterales</taxon>
        <taxon>Erwiniaceae</taxon>
        <taxon>Wigglesworthia</taxon>
    </lineage>
</organism>
<reference key="1">
    <citation type="journal article" date="2002" name="Nat. Genet.">
        <title>Genome sequence of the endocellular obligate symbiont of tsetse flies, Wigglesworthia glossinidia.</title>
        <authorList>
            <person name="Akman L."/>
            <person name="Yamashita A."/>
            <person name="Watanabe H."/>
            <person name="Oshima K."/>
            <person name="Shiba T."/>
            <person name="Hattori M."/>
            <person name="Aksoy S."/>
        </authorList>
    </citation>
    <scope>NUCLEOTIDE SEQUENCE [LARGE SCALE GENOMIC DNA]</scope>
</reference>
<comment type="catalytic activity">
    <reaction evidence="1">
        <text>L-cysteine + L-glutamate + ATP = gamma-L-glutamyl-L-cysteine + ADP + phosphate + H(+)</text>
        <dbReference type="Rhea" id="RHEA:13285"/>
        <dbReference type="ChEBI" id="CHEBI:15378"/>
        <dbReference type="ChEBI" id="CHEBI:29985"/>
        <dbReference type="ChEBI" id="CHEBI:30616"/>
        <dbReference type="ChEBI" id="CHEBI:35235"/>
        <dbReference type="ChEBI" id="CHEBI:43474"/>
        <dbReference type="ChEBI" id="CHEBI:58173"/>
        <dbReference type="ChEBI" id="CHEBI:456216"/>
        <dbReference type="EC" id="6.3.2.2"/>
    </reaction>
</comment>
<comment type="pathway">
    <text evidence="1">Sulfur metabolism; glutathione biosynthesis; glutathione from L-cysteine and L-glutamate: step 1/2.</text>
</comment>
<comment type="similarity">
    <text evidence="1">Belongs to the glutamate--cysteine ligase type 1 family. Type 1 subfamily.</text>
</comment>
<keyword id="KW-0067">ATP-binding</keyword>
<keyword id="KW-0317">Glutathione biosynthesis</keyword>
<keyword id="KW-0436">Ligase</keyword>
<keyword id="KW-0547">Nucleotide-binding</keyword>
<keyword id="KW-1185">Reference proteome</keyword>
<dbReference type="EC" id="6.3.2.2" evidence="1"/>
<dbReference type="EMBL" id="BA000021">
    <property type="protein sequence ID" value="BAC24393.1"/>
    <property type="molecule type" value="Genomic_DNA"/>
</dbReference>
<dbReference type="SMR" id="Q8D2V5"/>
<dbReference type="STRING" id="36870.gene:10368740"/>
<dbReference type="KEGG" id="wbr:gshA"/>
<dbReference type="eggNOG" id="COG2918">
    <property type="taxonomic scope" value="Bacteria"/>
</dbReference>
<dbReference type="HOGENOM" id="CLU_020728_3_0_6"/>
<dbReference type="OrthoDB" id="9803907at2"/>
<dbReference type="UniPathway" id="UPA00142">
    <property type="reaction ID" value="UER00209"/>
</dbReference>
<dbReference type="Proteomes" id="UP000000562">
    <property type="component" value="Chromosome"/>
</dbReference>
<dbReference type="GO" id="GO:0005829">
    <property type="term" value="C:cytosol"/>
    <property type="evidence" value="ECO:0007669"/>
    <property type="project" value="TreeGrafter"/>
</dbReference>
<dbReference type="GO" id="GO:0005524">
    <property type="term" value="F:ATP binding"/>
    <property type="evidence" value="ECO:0007669"/>
    <property type="project" value="UniProtKB-KW"/>
</dbReference>
<dbReference type="GO" id="GO:0004357">
    <property type="term" value="F:glutamate-cysteine ligase activity"/>
    <property type="evidence" value="ECO:0007669"/>
    <property type="project" value="UniProtKB-UniRule"/>
</dbReference>
<dbReference type="GO" id="GO:0046872">
    <property type="term" value="F:metal ion binding"/>
    <property type="evidence" value="ECO:0007669"/>
    <property type="project" value="TreeGrafter"/>
</dbReference>
<dbReference type="GO" id="GO:0006750">
    <property type="term" value="P:glutathione biosynthetic process"/>
    <property type="evidence" value="ECO:0007669"/>
    <property type="project" value="UniProtKB-UniRule"/>
</dbReference>
<dbReference type="Gene3D" id="3.30.590.20">
    <property type="match status" value="1"/>
</dbReference>
<dbReference type="HAMAP" id="MF_00578">
    <property type="entry name" value="Glu_cys_ligase"/>
    <property type="match status" value="1"/>
</dbReference>
<dbReference type="InterPro" id="IPR014746">
    <property type="entry name" value="Gln_synth/guanido_kin_cat_dom"/>
</dbReference>
<dbReference type="InterPro" id="IPR007370">
    <property type="entry name" value="Glu_cys_ligase"/>
</dbReference>
<dbReference type="InterPro" id="IPR006334">
    <property type="entry name" value="Glut_cys_ligase"/>
</dbReference>
<dbReference type="NCBIfam" id="TIGR01434">
    <property type="entry name" value="glu_cys_ligase"/>
    <property type="match status" value="1"/>
</dbReference>
<dbReference type="PANTHER" id="PTHR38761">
    <property type="entry name" value="GLUTAMATE--CYSTEINE LIGASE"/>
    <property type="match status" value="1"/>
</dbReference>
<dbReference type="PANTHER" id="PTHR38761:SF1">
    <property type="entry name" value="GLUTAMATE--CYSTEINE LIGASE"/>
    <property type="match status" value="1"/>
</dbReference>
<dbReference type="Pfam" id="PF04262">
    <property type="entry name" value="Glu_cys_ligase"/>
    <property type="match status" value="1"/>
</dbReference>
<dbReference type="SUPFAM" id="SSF55931">
    <property type="entry name" value="Glutamine synthetase/guanido kinase"/>
    <property type="match status" value="1"/>
</dbReference>
<evidence type="ECO:0000255" key="1">
    <source>
        <dbReference type="HAMAP-Rule" id="MF_00578"/>
    </source>
</evidence>
<gene>
    <name evidence="1" type="primary">gshA</name>
    <name type="ordered locus">WIGBR2470</name>
</gene>
<protein>
    <recommendedName>
        <fullName evidence="1">Glutamate--cysteine ligase</fullName>
        <ecNumber evidence="1">6.3.2.2</ecNumber>
    </recommendedName>
    <alternativeName>
        <fullName evidence="1">Gamma-ECS</fullName>
        <shortName evidence="1">GCS</shortName>
    </alternativeName>
    <alternativeName>
        <fullName evidence="1">Gamma-glutamylcysteine synthetase</fullName>
    </alternativeName>
</protein>
<proteinExistence type="inferred from homology"/>